<proteinExistence type="evidence at protein level"/>
<sequence length="260" mass="28792">MNSAAGFSHLDRRERVLKLGESFEKQPRCAFHTVRYDFKPASIDTSSEGYLEVGEGEQVTITLPNIEGSTPPVTVFKGSKKPYLKECILIINHDTGECRLEKLSSNITVKKTRVEGSSKIQYRKEQQQQQMWNSARTPNLVKHSPSEDKMSPASPIDDIERELKAEASLMDQMSSCDSSSDSKSSSSSSSEDSSSDSEDEDCKSSTSDTGNCVSGHPTMTQYRIPDIDASHNRFRDNSGLLMNTLRNDLQLSESGSDSDD</sequence>
<keyword id="KW-0010">Activator</keyword>
<keyword id="KW-0025">Alternative splicing</keyword>
<keyword id="KW-0053">Apoptosis</keyword>
<keyword id="KW-0539">Nucleus</keyword>
<keyword id="KW-0597">Phosphoprotein</keyword>
<keyword id="KW-1267">Proteomics identification</keyword>
<keyword id="KW-1185">Reference proteome</keyword>
<keyword id="KW-0804">Transcription</keyword>
<keyword id="KW-0805">Transcription regulation</keyword>
<organism>
    <name type="scientific">Homo sapiens</name>
    <name type="common">Human</name>
    <dbReference type="NCBI Taxonomy" id="9606"/>
    <lineage>
        <taxon>Eukaryota</taxon>
        <taxon>Metazoa</taxon>
        <taxon>Chordata</taxon>
        <taxon>Craniata</taxon>
        <taxon>Vertebrata</taxon>
        <taxon>Euteleostomi</taxon>
        <taxon>Mammalia</taxon>
        <taxon>Eutheria</taxon>
        <taxon>Euarchontoglires</taxon>
        <taxon>Primates</taxon>
        <taxon>Haplorrhini</taxon>
        <taxon>Catarrhini</taxon>
        <taxon>Hominidae</taxon>
        <taxon>Homo</taxon>
    </lineage>
</organism>
<dbReference type="EMBL" id="AF517829">
    <property type="protein sequence ID" value="AAO63811.1"/>
    <property type="molecule type" value="mRNA"/>
</dbReference>
<dbReference type="EMBL" id="AY049020">
    <property type="protein sequence ID" value="AAL12223.1"/>
    <property type="molecule type" value="mRNA"/>
</dbReference>
<dbReference type="EMBL" id="AF217516">
    <property type="protein sequence ID" value="AAF67627.1"/>
    <property type="molecule type" value="mRNA"/>
</dbReference>
<dbReference type="EMBL" id="BC014209">
    <property type="protein sequence ID" value="AAH14209.1"/>
    <property type="molecule type" value="mRNA"/>
</dbReference>
<dbReference type="CCDS" id="CCDS3006.1">
    <molecule id="Q96CJ1-1"/>
</dbReference>
<dbReference type="RefSeq" id="NP_001306970.1">
    <molecule id="Q96CJ1-2"/>
    <property type="nucleotide sequence ID" value="NM_001320041.2"/>
</dbReference>
<dbReference type="RefSeq" id="NP_060926.2">
    <molecule id="Q96CJ1-1"/>
    <property type="nucleotide sequence ID" value="NM_018456.5"/>
</dbReference>
<dbReference type="RefSeq" id="XP_016862350.1">
    <molecule id="Q96CJ1-2"/>
    <property type="nucleotide sequence ID" value="XM_017006861.2"/>
</dbReference>
<dbReference type="RefSeq" id="XP_016862351.1">
    <property type="nucleotide sequence ID" value="XM_017006862.1"/>
</dbReference>
<dbReference type="RefSeq" id="XP_047304533.1">
    <molecule id="Q96CJ1-2"/>
    <property type="nucleotide sequence ID" value="XM_047448577.1"/>
</dbReference>
<dbReference type="RefSeq" id="XP_054203232.1">
    <molecule id="Q96CJ1-2"/>
    <property type="nucleotide sequence ID" value="XM_054347257.1"/>
</dbReference>
<dbReference type="RefSeq" id="XP_054203233.1">
    <molecule id="Q96CJ1-2"/>
    <property type="nucleotide sequence ID" value="XM_054347258.1"/>
</dbReference>
<dbReference type="SMR" id="Q96CJ1"/>
<dbReference type="BioGRID" id="120943">
    <property type="interactions" value="37"/>
</dbReference>
<dbReference type="CORUM" id="Q96CJ1"/>
<dbReference type="FunCoup" id="Q96CJ1">
    <property type="interactions" value="947"/>
</dbReference>
<dbReference type="IntAct" id="Q96CJ1">
    <property type="interactions" value="27"/>
</dbReference>
<dbReference type="MINT" id="Q96CJ1"/>
<dbReference type="STRING" id="9606.ENSP00000273668"/>
<dbReference type="iPTMnet" id="Q96CJ1"/>
<dbReference type="PhosphoSitePlus" id="Q96CJ1"/>
<dbReference type="BioMuta" id="EAF2"/>
<dbReference type="DMDM" id="73919269"/>
<dbReference type="jPOST" id="Q96CJ1"/>
<dbReference type="MassIVE" id="Q96CJ1"/>
<dbReference type="PaxDb" id="9606-ENSP00000273668"/>
<dbReference type="PeptideAtlas" id="Q96CJ1"/>
<dbReference type="ProteomicsDB" id="76189">
    <molecule id="Q96CJ1-1"/>
</dbReference>
<dbReference type="ProteomicsDB" id="76190">
    <molecule id="Q96CJ1-2"/>
</dbReference>
<dbReference type="Antibodypedia" id="1994">
    <property type="antibodies" value="179 antibodies from 31 providers"/>
</dbReference>
<dbReference type="DNASU" id="55840"/>
<dbReference type="Ensembl" id="ENST00000273668.7">
    <molecule id="Q96CJ1-1"/>
    <property type="protein sequence ID" value="ENSP00000273668.2"/>
    <property type="gene ID" value="ENSG00000145088.9"/>
</dbReference>
<dbReference type="GeneID" id="55840"/>
<dbReference type="KEGG" id="hsa:55840"/>
<dbReference type="MANE-Select" id="ENST00000273668.7">
    <property type="protein sequence ID" value="ENSP00000273668.2"/>
    <property type="RefSeq nucleotide sequence ID" value="NM_018456.6"/>
    <property type="RefSeq protein sequence ID" value="NP_060926.2"/>
</dbReference>
<dbReference type="UCSC" id="uc003een.4">
    <molecule id="Q96CJ1-1"/>
    <property type="organism name" value="human"/>
</dbReference>
<dbReference type="AGR" id="HGNC:23115"/>
<dbReference type="CTD" id="55840"/>
<dbReference type="DisGeNET" id="55840"/>
<dbReference type="GeneCards" id="EAF2"/>
<dbReference type="HGNC" id="HGNC:23115">
    <property type="gene designation" value="EAF2"/>
</dbReference>
<dbReference type="HPA" id="ENSG00000145088">
    <property type="expression patterns" value="Tissue enhanced (bone marrow, lymphoid tissue)"/>
</dbReference>
<dbReference type="MalaCards" id="EAF2"/>
<dbReference type="MIM" id="607659">
    <property type="type" value="gene"/>
</dbReference>
<dbReference type="neXtProt" id="NX_Q96CJ1"/>
<dbReference type="OpenTargets" id="ENSG00000145088"/>
<dbReference type="PharmGKB" id="PA128394690"/>
<dbReference type="VEuPathDB" id="HostDB:ENSG00000145088"/>
<dbReference type="eggNOG" id="KOG4795">
    <property type="taxonomic scope" value="Eukaryota"/>
</dbReference>
<dbReference type="GeneTree" id="ENSGT00390000017724"/>
<dbReference type="HOGENOM" id="CLU_025755_1_0_1"/>
<dbReference type="InParanoid" id="Q96CJ1"/>
<dbReference type="OMA" id="CLLFFDH"/>
<dbReference type="OrthoDB" id="125903at2759"/>
<dbReference type="PAN-GO" id="Q96CJ1">
    <property type="GO annotations" value="4 GO annotations based on evolutionary models"/>
</dbReference>
<dbReference type="PhylomeDB" id="Q96CJ1"/>
<dbReference type="TreeFam" id="TF320864"/>
<dbReference type="PathwayCommons" id="Q96CJ1"/>
<dbReference type="Reactome" id="R-HSA-112382">
    <property type="pathway name" value="Formation of RNA Pol II elongation complex"/>
</dbReference>
<dbReference type="Reactome" id="R-HSA-674695">
    <property type="pathway name" value="RNA Polymerase II Pre-transcription Events"/>
</dbReference>
<dbReference type="Reactome" id="R-HSA-75955">
    <property type="pathway name" value="RNA Polymerase II Transcription Elongation"/>
</dbReference>
<dbReference type="SignaLink" id="Q96CJ1"/>
<dbReference type="SIGNOR" id="Q96CJ1"/>
<dbReference type="BioGRID-ORCS" id="55840">
    <property type="hits" value="14 hits in 1172 CRISPR screens"/>
</dbReference>
<dbReference type="CD-CODE" id="6F24707C">
    <property type="entry name" value="Cajal body"/>
</dbReference>
<dbReference type="CD-CODE" id="804901D1">
    <property type="entry name" value="Nuclear speckle"/>
</dbReference>
<dbReference type="ChiTaRS" id="EAF2">
    <property type="organism name" value="human"/>
</dbReference>
<dbReference type="GeneWiki" id="EAF2"/>
<dbReference type="GenomeRNAi" id="55840"/>
<dbReference type="Pharos" id="Q96CJ1">
    <property type="development level" value="Tbio"/>
</dbReference>
<dbReference type="PRO" id="PR:Q96CJ1"/>
<dbReference type="Proteomes" id="UP000005640">
    <property type="component" value="Chromosome 3"/>
</dbReference>
<dbReference type="RNAct" id="Q96CJ1">
    <property type="molecule type" value="protein"/>
</dbReference>
<dbReference type="Bgee" id="ENSG00000145088">
    <property type="expression patterns" value="Expressed in bone marrow cell and 157 other cell types or tissues"/>
</dbReference>
<dbReference type="ExpressionAtlas" id="Q96CJ1">
    <property type="expression patterns" value="baseline and differential"/>
</dbReference>
<dbReference type="GO" id="GO:0016607">
    <property type="term" value="C:nuclear speck"/>
    <property type="evidence" value="ECO:0007669"/>
    <property type="project" value="UniProtKB-SubCell"/>
</dbReference>
<dbReference type="GO" id="GO:0005654">
    <property type="term" value="C:nucleoplasm"/>
    <property type="evidence" value="ECO:0000304"/>
    <property type="project" value="Reactome"/>
</dbReference>
<dbReference type="GO" id="GO:0032783">
    <property type="term" value="C:super elongation complex"/>
    <property type="evidence" value="ECO:0007669"/>
    <property type="project" value="InterPro"/>
</dbReference>
<dbReference type="GO" id="GO:0008023">
    <property type="term" value="C:transcription elongation factor complex"/>
    <property type="evidence" value="ECO:0000314"/>
    <property type="project" value="UniProtKB"/>
</dbReference>
<dbReference type="GO" id="GO:0003711">
    <property type="term" value="F:transcription elongation factor activity"/>
    <property type="evidence" value="ECO:0000315"/>
    <property type="project" value="ARUK-UCL"/>
</dbReference>
<dbReference type="GO" id="GO:0006915">
    <property type="term" value="P:apoptotic process"/>
    <property type="evidence" value="ECO:0007669"/>
    <property type="project" value="UniProtKB-KW"/>
</dbReference>
<dbReference type="GO" id="GO:0060767">
    <property type="term" value="P:epithelial cell proliferation involved in prostate gland development"/>
    <property type="evidence" value="ECO:0007669"/>
    <property type="project" value="Ensembl"/>
</dbReference>
<dbReference type="GO" id="GO:0030308">
    <property type="term" value="P:negative regulation of cell growth"/>
    <property type="evidence" value="ECO:0007669"/>
    <property type="project" value="Ensembl"/>
</dbReference>
<dbReference type="GO" id="GO:0060770">
    <property type="term" value="P:negative regulation of epithelial cell proliferation involved in prostate gland development"/>
    <property type="evidence" value="ECO:0007669"/>
    <property type="project" value="Ensembl"/>
</dbReference>
<dbReference type="GO" id="GO:0045944">
    <property type="term" value="P:positive regulation of transcription by RNA polymerase II"/>
    <property type="evidence" value="ECO:0000314"/>
    <property type="project" value="NTNU_SB"/>
</dbReference>
<dbReference type="GO" id="GO:0034243">
    <property type="term" value="P:regulation of transcription elongation by RNA polymerase II"/>
    <property type="evidence" value="ECO:0000315"/>
    <property type="project" value="ARUK-UCL"/>
</dbReference>
<dbReference type="GO" id="GO:0006368">
    <property type="term" value="P:transcription elongation by RNA polymerase II"/>
    <property type="evidence" value="ECO:0000318"/>
    <property type="project" value="GO_Central"/>
</dbReference>
<dbReference type="InterPro" id="IPR027093">
    <property type="entry name" value="EAF_fam"/>
</dbReference>
<dbReference type="InterPro" id="IPR019194">
    <property type="entry name" value="Tscrpt_elong_fac_Eaf_N"/>
</dbReference>
<dbReference type="PANTHER" id="PTHR15970:SF7">
    <property type="entry name" value="ELL-ASSOCIATED FACTOR 2"/>
    <property type="match status" value="1"/>
</dbReference>
<dbReference type="PANTHER" id="PTHR15970">
    <property type="entry name" value="ELL-ASSOCIATED FACTOR EAF"/>
    <property type="match status" value="1"/>
</dbReference>
<dbReference type="Pfam" id="PF09816">
    <property type="entry name" value="EAF"/>
    <property type="match status" value="1"/>
</dbReference>
<reference key="1">
    <citation type="journal article" date="2003" name="Blood">
        <title>ELL-associated factor 2 (EAF2), a functional homolog of EAF1 with alternative ELL binding properties.</title>
        <authorList>
            <person name="Simone F."/>
            <person name="Luo R.T."/>
            <person name="Polak P.E."/>
            <person name="Kaberlein J.J."/>
            <person name="Thirman M.J."/>
        </authorList>
    </citation>
    <scope>NUCLEOTIDE SEQUENCE [MRNA] (ISOFORM 1)</scope>
    <scope>FUNCTION</scope>
    <scope>INTERACTION WITH ELL AND ELL2</scope>
    <scope>SUBCELLULAR LOCATION</scope>
    <scope>TISSUE SPECIFICITY</scope>
    <source>
        <tissue>Bone marrow</tissue>
    </source>
</reference>
<reference key="2">
    <citation type="journal article" date="2003" name="Cancer Res.">
        <title>Suppression of prostate tumor growth by U19, a novel testosterone-regulated apoptosis inducer.</title>
        <authorList>
            <person name="Xiao W."/>
            <person name="Zhang Q."/>
            <person name="Jiang F."/>
            <person name="Pins M."/>
            <person name="Kozlowski J.M."/>
            <person name="Wang Z."/>
        </authorList>
    </citation>
    <scope>NUCLEOTIDE SEQUENCE [MRNA] (ISOFORM 1)</scope>
    <scope>FUNCTION IN APOPTOSIS</scope>
    <scope>INDUCTION</scope>
    <scope>SUBCELLULAR LOCATION</scope>
    <scope>TISSUE SPECIFICITY</scope>
</reference>
<reference key="3">
    <citation type="journal article" date="2000" name="Genome Res.">
        <title>Cloning and functional analysis of cDNAs with open reading frames for 300 previously undefined genes expressed in CD34+ hematopoietic stem/progenitor cells.</title>
        <authorList>
            <person name="Zhang Q.-H."/>
            <person name="Ye M."/>
            <person name="Wu X.-Y."/>
            <person name="Ren S.-X."/>
            <person name="Zhao M."/>
            <person name="Zhao C.-J."/>
            <person name="Fu G."/>
            <person name="Shen Y."/>
            <person name="Fan H.-Y."/>
            <person name="Lu G."/>
            <person name="Zhong M."/>
            <person name="Xu X.-R."/>
            <person name="Han Z.-G."/>
            <person name="Zhang J.-W."/>
            <person name="Tao J."/>
            <person name="Huang Q.-H."/>
            <person name="Zhou J."/>
            <person name="Hu G.-X."/>
            <person name="Gu J."/>
            <person name="Chen S.-J."/>
            <person name="Chen Z."/>
        </authorList>
    </citation>
    <scope>NUCLEOTIDE SEQUENCE [LARGE SCALE MRNA] (ISOFORM 2)</scope>
    <source>
        <tissue>Bone marrow</tissue>
    </source>
</reference>
<reference key="4">
    <citation type="journal article" date="2004" name="Genome Res.">
        <title>The status, quality, and expansion of the NIH full-length cDNA project: the Mammalian Gene Collection (MGC).</title>
        <authorList>
            <consortium name="The MGC Project Team"/>
        </authorList>
    </citation>
    <scope>NUCLEOTIDE SEQUENCE [LARGE SCALE MRNA] (ISOFORM 1)</scope>
    <source>
        <tissue>B-cell</tissue>
    </source>
</reference>
<reference key="5">
    <citation type="journal article" date="2005" name="Proc. Natl. Acad. Sci. U.S.A.">
        <title>ELL-associated factors 1 and 2 are positive regulators of RNA polymerase II elongation factor ELL.</title>
        <authorList>
            <person name="Kong S.E."/>
            <person name="Banks C.A."/>
            <person name="Shilatifard A."/>
            <person name="Conaway J.W."/>
            <person name="Conaway R.C."/>
        </authorList>
    </citation>
    <scope>FUNCTION</scope>
</reference>
<reference key="6">
    <citation type="journal article" date="2008" name="Proc. Natl. Acad. Sci. U.S.A.">
        <title>A quantitative atlas of mitotic phosphorylation.</title>
        <authorList>
            <person name="Dephoure N."/>
            <person name="Zhou C."/>
            <person name="Villen J."/>
            <person name="Beausoleil S.A."/>
            <person name="Bakalarski C.E."/>
            <person name="Elledge S.J."/>
            <person name="Gygi S.P."/>
        </authorList>
    </citation>
    <scope>PHOSPHORYLATION [LARGE SCALE ANALYSIS] AT SER-151 AND SER-154</scope>
    <scope>IDENTIFICATION BY MASS SPECTROMETRY [LARGE SCALE ANALYSIS]</scope>
    <source>
        <tissue>Cervix carcinoma</tissue>
    </source>
</reference>
<reference key="7">
    <citation type="journal article" date="2009" name="Sci. Signal.">
        <title>Quantitative phosphoproteomic analysis of T cell receptor signaling reveals system-wide modulation of protein-protein interactions.</title>
        <authorList>
            <person name="Mayya V."/>
            <person name="Lundgren D.H."/>
            <person name="Hwang S.-I."/>
            <person name="Rezaul K."/>
            <person name="Wu L."/>
            <person name="Eng J.K."/>
            <person name="Rodionov V."/>
            <person name="Han D.K."/>
        </authorList>
    </citation>
    <scope>PHOSPHORYLATION [LARGE SCALE ANALYSIS] AT SER-154</scope>
    <scope>IDENTIFICATION BY MASS SPECTROMETRY [LARGE SCALE ANALYSIS]</scope>
    <source>
        <tissue>Leukemic T-cell</tissue>
    </source>
</reference>
<reference key="8">
    <citation type="journal article" date="2011" name="Mol. Cell">
        <title>The little elongation complex regulates small nuclear RNA transcription.</title>
        <authorList>
            <person name="Smith E.R."/>
            <person name="Lin C."/>
            <person name="Garrett A.S."/>
            <person name="Thornton J."/>
            <person name="Mohaghegh N."/>
            <person name="Hu D."/>
            <person name="Jackson J."/>
            <person name="Saraf A."/>
            <person name="Swanson S.K."/>
            <person name="Seidel C."/>
            <person name="Florens L."/>
            <person name="Washburn M.P."/>
            <person name="Eissenberg J.C."/>
            <person name="Shilatifard A."/>
        </authorList>
    </citation>
    <scope>IDENTIFICATION IN THE SEC COMPLEX</scope>
</reference>
<reference key="9">
    <citation type="journal article" date="2013" name="J. Proteome Res.">
        <title>Toward a comprehensive characterization of a human cancer cell phosphoproteome.</title>
        <authorList>
            <person name="Zhou H."/>
            <person name="Di Palma S."/>
            <person name="Preisinger C."/>
            <person name="Peng M."/>
            <person name="Polat A.N."/>
            <person name="Heck A.J."/>
            <person name="Mohammed S."/>
        </authorList>
    </citation>
    <scope>PHOSPHORYLATION [LARGE SCALE ANALYSIS] AT SER-146 AND SER-154</scope>
    <scope>IDENTIFICATION BY MASS SPECTROMETRY [LARGE SCALE ANALYSIS]</scope>
    <source>
        <tissue>Cervix carcinoma</tissue>
        <tissue>Erythroleukemia</tissue>
    </source>
</reference>
<protein>
    <recommendedName>
        <fullName>ELL-associated factor 2</fullName>
    </recommendedName>
    <alternativeName>
        <fullName>Testosterone-regulated apoptosis inducer and tumor suppressor protein</fullName>
    </alternativeName>
</protein>
<name>EAF2_HUMAN</name>
<evidence type="ECO:0000250" key="1"/>
<evidence type="ECO:0000256" key="2">
    <source>
        <dbReference type="SAM" id="MobiDB-lite"/>
    </source>
</evidence>
<evidence type="ECO:0000269" key="3">
    <source>
    </source>
</evidence>
<evidence type="ECO:0000269" key="4">
    <source>
    </source>
</evidence>
<evidence type="ECO:0000269" key="5">
    <source>
    </source>
</evidence>
<evidence type="ECO:0000269" key="6">
    <source>
    </source>
</evidence>
<evidence type="ECO:0000303" key="7">
    <source>
    </source>
</evidence>
<evidence type="ECO:0000305" key="8"/>
<evidence type="ECO:0007744" key="9">
    <source>
    </source>
</evidence>
<evidence type="ECO:0007744" key="10">
    <source>
    </source>
</evidence>
<evidence type="ECO:0007744" key="11">
    <source>
    </source>
</evidence>
<gene>
    <name type="primary">EAF2</name>
    <name type="synonym">TRAITS</name>
    <name type="ORF">BM-040</name>
</gene>
<feature type="chain" id="PRO_0000130337" description="ELL-associated factor 2">
    <location>
        <begin position="1"/>
        <end position="260"/>
    </location>
</feature>
<feature type="region of interest" description="Necessary for interaction with ELL" evidence="3">
    <location>
        <begin position="17"/>
        <end position="104"/>
    </location>
</feature>
<feature type="region of interest" description="Disordered" evidence="2">
    <location>
        <begin position="116"/>
        <end position="154"/>
    </location>
</feature>
<feature type="region of interest" description="Disordered" evidence="2">
    <location>
        <begin position="170"/>
        <end position="234"/>
    </location>
</feature>
<feature type="region of interest" description="Necessary for transactivation activity">
    <location>
        <begin position="177"/>
        <end position="260"/>
    </location>
</feature>
<feature type="region of interest" description="Necessary for interaction with TCEA1 and transactivation activity" evidence="1">
    <location>
        <begin position="246"/>
        <end position="260"/>
    </location>
</feature>
<feature type="compositionally biased region" description="Basic and acidic residues" evidence="2">
    <location>
        <begin position="116"/>
        <end position="126"/>
    </location>
</feature>
<feature type="compositionally biased region" description="Low complexity" evidence="2">
    <location>
        <begin position="174"/>
        <end position="192"/>
    </location>
</feature>
<feature type="compositionally biased region" description="Basic and acidic residues" evidence="2">
    <location>
        <begin position="225"/>
        <end position="234"/>
    </location>
</feature>
<feature type="modified residue" description="Phosphoserine" evidence="11">
    <location>
        <position position="146"/>
    </location>
</feature>
<feature type="modified residue" description="Phosphoserine" evidence="9">
    <location>
        <position position="151"/>
    </location>
</feature>
<feature type="modified residue" description="Phosphoserine" evidence="9 10 11">
    <location>
        <position position="154"/>
    </location>
</feature>
<feature type="splice variant" id="VSP_015310" description="In isoform 2." evidence="7">
    <location>
        <begin position="1"/>
        <end position="130"/>
    </location>
</feature>
<accession>Q96CJ1</accession>
<accession>Q9NZ82</accession>
<comment type="function">
    <text evidence="1 3 4 5">Acts as a transcriptional transactivator of TCEA1 elongation activity (By similarity). Acts as a transcriptional transactivator of ELL and ELL2 elongation activities. Potent inducer of apoptosis in prostatic and non-prostatic cell lines. Inhibits prostate tumor growth in vivo.</text>
</comment>
<comment type="subunit">
    <text evidence="1 3 6">Isoform 1 and isoform 2 interact with TCEA1 (By similarity). Component of the super elongation complex (SEC), at least composed of EAF1, EAF2, CDK9, MLLT3/AF9, AFF (AFF1 or AFF4), the P-TEFb complex and ELL (ELL, ELL2 or ELL3). Interacts with ELL and ELL2.</text>
</comment>
<comment type="interaction">
    <interactant intactId="EBI-1245604">
        <id>Q96CJ1</id>
    </interactant>
    <interactant intactId="EBI-10181188">
        <id>Q8N7W2-2</id>
        <label>BEND7</label>
    </interactant>
    <organismsDiffer>false</organismsDiffer>
    <experiments>5</experiments>
</comment>
<comment type="interaction">
    <interactant intactId="EBI-1245604">
        <id>Q96CJ1</id>
    </interactant>
    <interactant intactId="EBI-514538">
        <id>Q13490</id>
        <label>BIRC2</label>
    </interactant>
    <organismsDiffer>false</organismsDiffer>
    <experiments>3</experiments>
</comment>
<comment type="interaction">
    <interactant intactId="EBI-1245604">
        <id>Q96CJ1</id>
    </interactant>
    <interactant intactId="EBI-447269">
        <id>Q16665</id>
        <label>HIF1A</label>
    </interactant>
    <organismsDiffer>false</organismsDiffer>
    <experiments>3</experiments>
</comment>
<comment type="interaction">
    <interactant intactId="EBI-1245604">
        <id>Q96CJ1</id>
    </interactant>
    <interactant intactId="EBI-355546">
        <id>P61289</id>
        <label>PSME3</label>
    </interactant>
    <organismsDiffer>false</organismsDiffer>
    <experiments>3</experiments>
</comment>
<comment type="interaction">
    <interactant intactId="EBI-1245604">
        <id>Q96CJ1</id>
    </interactant>
    <interactant intactId="EBI-710310">
        <id>Q15560</id>
        <label>TCEA2</label>
    </interactant>
    <organismsDiffer>false</organismsDiffer>
    <experiments>3</experiments>
</comment>
<comment type="interaction">
    <interactant intactId="EBI-1245604">
        <id>Q96CJ1</id>
    </interactant>
    <interactant intactId="EBI-1245626">
        <id>P0C1Z6</id>
        <label>TFPT</label>
    </interactant>
    <organismsDiffer>false</organismsDiffer>
    <experiments>4</experiments>
</comment>
<comment type="interaction">
    <interactant intactId="EBI-1245604">
        <id>Q96CJ1</id>
    </interactant>
    <interactant intactId="EBI-740098">
        <id>P36406</id>
        <label>TRIM23</label>
    </interactant>
    <organismsDiffer>false</organismsDiffer>
    <experiments>3</experiments>
</comment>
<comment type="subcellular location">
    <subcellularLocation>
        <location evidence="3 4">Nucleus speckle</location>
    </subcellularLocation>
</comment>
<comment type="alternative products">
    <event type="alternative splicing"/>
    <isoform>
        <id>Q96CJ1-1</id>
        <name>1</name>
        <sequence type="displayed"/>
    </isoform>
    <isoform>
        <id>Q96CJ1-2</id>
        <name>2</name>
        <sequence type="described" ref="VSP_015310"/>
    </isoform>
</comment>
<comment type="tissue specificity">
    <text evidence="3 4">Expressed in heart, brain, placenta, lung, skeletal muscle, kidney, pancreas, spleen, prostate, testis, small intestine, colon, adrenal, bone marrow, lymph node, spinal gland, stomach, thyroid, trachea, thymus, liver and leukocytes.</text>
</comment>
<comment type="induction">
    <text evidence="4">By androgen.</text>
</comment>
<comment type="similarity">
    <text evidence="8">Belongs to the EAF family.</text>
</comment>